<feature type="chain" id="PRO_0000138454" description="UvrABC system protein B">
    <location>
        <begin position="1"/>
        <end position="670"/>
    </location>
</feature>
<feature type="domain" description="Helicase ATP-binding" evidence="1">
    <location>
        <begin position="51"/>
        <end position="433"/>
    </location>
</feature>
<feature type="domain" description="Helicase C-terminal" evidence="1">
    <location>
        <begin position="453"/>
        <end position="612"/>
    </location>
</feature>
<feature type="domain" description="UVR" evidence="1">
    <location>
        <begin position="631"/>
        <end position="666"/>
    </location>
</feature>
<feature type="short sequence motif" description="Beta-hairpin">
    <location>
        <begin position="117"/>
        <end position="140"/>
    </location>
</feature>
<feature type="binding site" evidence="1">
    <location>
        <begin position="64"/>
        <end position="71"/>
    </location>
    <ligand>
        <name>ATP</name>
        <dbReference type="ChEBI" id="CHEBI:30616"/>
    </ligand>
</feature>
<gene>
    <name evidence="1" type="primary">uvrB</name>
    <name type="ordered locus">MA_3323</name>
</gene>
<name>UVRB_METAC</name>
<accession>Q8TKS3</accession>
<comment type="function">
    <text evidence="1">The UvrABC repair system catalyzes the recognition and processing of DNA lesions. A damage recognition complex composed of 2 UvrA and 2 UvrB subunits scans DNA for abnormalities. Upon binding of the UvrA(2)B(2) complex to a putative damaged site, the DNA wraps around one UvrB monomer. DNA wrap is dependent on ATP binding by UvrB and probably causes local melting of the DNA helix, facilitating insertion of UvrB beta-hairpin between the DNA strands. Then UvrB probes one DNA strand for the presence of a lesion. If a lesion is found the UvrA subunits dissociate and the UvrB-DNA preincision complex is formed. This complex is subsequently bound by UvrC and the second UvrB is released. If no lesion is found, the DNA wraps around the other UvrB subunit that will check the other stand for damage.</text>
</comment>
<comment type="subunit">
    <text evidence="1">Forms a heterotetramer with UvrA during the search for lesions. Interacts with UvrC in an incision complex.</text>
</comment>
<comment type="subcellular location">
    <subcellularLocation>
        <location evidence="1">Cytoplasm</location>
    </subcellularLocation>
</comment>
<comment type="domain">
    <text evidence="1">The beta-hairpin motif is involved in DNA binding.</text>
</comment>
<comment type="similarity">
    <text evidence="1">Belongs to the UvrB family.</text>
</comment>
<reference key="1">
    <citation type="journal article" date="2002" name="Genome Res.">
        <title>The genome of Methanosarcina acetivorans reveals extensive metabolic and physiological diversity.</title>
        <authorList>
            <person name="Galagan J.E."/>
            <person name="Nusbaum C."/>
            <person name="Roy A."/>
            <person name="Endrizzi M.G."/>
            <person name="Macdonald P."/>
            <person name="FitzHugh W."/>
            <person name="Calvo S."/>
            <person name="Engels R."/>
            <person name="Smirnov S."/>
            <person name="Atnoor D."/>
            <person name="Brown A."/>
            <person name="Allen N."/>
            <person name="Naylor J."/>
            <person name="Stange-Thomann N."/>
            <person name="DeArellano K."/>
            <person name="Johnson R."/>
            <person name="Linton L."/>
            <person name="McEwan P."/>
            <person name="McKernan K."/>
            <person name="Talamas J."/>
            <person name="Tirrell A."/>
            <person name="Ye W."/>
            <person name="Zimmer A."/>
            <person name="Barber R.D."/>
            <person name="Cann I."/>
            <person name="Graham D.E."/>
            <person name="Grahame D.A."/>
            <person name="Guss A.M."/>
            <person name="Hedderich R."/>
            <person name="Ingram-Smith C."/>
            <person name="Kuettner H.C."/>
            <person name="Krzycki J.A."/>
            <person name="Leigh J.A."/>
            <person name="Li W."/>
            <person name="Liu J."/>
            <person name="Mukhopadhyay B."/>
            <person name="Reeve J.N."/>
            <person name="Smith K."/>
            <person name="Springer T.A."/>
            <person name="Umayam L.A."/>
            <person name="White O."/>
            <person name="White R.H."/>
            <person name="de Macario E.C."/>
            <person name="Ferry J.G."/>
            <person name="Jarrell K.F."/>
            <person name="Jing H."/>
            <person name="Macario A.J.L."/>
            <person name="Paulsen I.T."/>
            <person name="Pritchett M."/>
            <person name="Sowers K.R."/>
            <person name="Swanson R.V."/>
            <person name="Zinder S.H."/>
            <person name="Lander E."/>
            <person name="Metcalf W.W."/>
            <person name="Birren B."/>
        </authorList>
    </citation>
    <scope>NUCLEOTIDE SEQUENCE [LARGE SCALE GENOMIC DNA]</scope>
    <source>
        <strain>ATCC 35395 / DSM 2834 / JCM 12185 / C2A</strain>
    </source>
</reference>
<sequence length="670" mass="77789">MKVSSQTPGELSKKKFELLHDARYWDSPQFKLISGFEPKGSQPQAIEKLVEGLKKREQFQTLLGVTGSGKTYTVANVINQIRKPTLVIAHNKTLAAQLYNEFREFFPENRVEYFVSYYDYYQPESYLPAKDQYIEKDAQINPKIEQMRLAATASLMSRQDVIVVASVSCIYGLGNPENFQKMGFELKVGDKVQRKEILEKLIDIQFERNDMELMPGRFRVKGDTIDIIPGYFDDIIRVELFGDEVDRISEVDKQTGQRKEDMDYFFVYPARHYVIPEEEQKSAIRSILEELEEHLPTLGLLESHRLKQRTLYDMEMIEETGSCKGIENYSRHFDHRQPGEQPFCLLDYFPEDFLLIIDESHQTIPQLHGMYNGDRSRKKSLVDYGFRLPSAYDNRPLKFEEFEKYMENVIFVSATPSDYEREHSARIVEQIIRPTGLVDPEVEVRPLEGQVRDVMQEIRKIVDRGDRALVTTLTKKLAEELTEFLARNEIKARYLHSDIKTIERTEIIRELRLGKFDVLVGINLLREGLDIPEVGFIGILDADKEGFLRDSKSLIQIIGRAARNSSSKVVLYADNMTESIKKAVDETERRRSMQIAYNEEHGIVPKTIRKPIREKVVDITDTKHIPKTDIPNVIIELDAEMREAADRLDFERAIQLRELIKKLEKEVKAV</sequence>
<organism>
    <name type="scientific">Methanosarcina acetivorans (strain ATCC 35395 / DSM 2834 / JCM 12185 / C2A)</name>
    <dbReference type="NCBI Taxonomy" id="188937"/>
    <lineage>
        <taxon>Archaea</taxon>
        <taxon>Methanobacteriati</taxon>
        <taxon>Methanobacteriota</taxon>
        <taxon>Stenosarchaea group</taxon>
        <taxon>Methanomicrobia</taxon>
        <taxon>Methanosarcinales</taxon>
        <taxon>Methanosarcinaceae</taxon>
        <taxon>Methanosarcina</taxon>
    </lineage>
</organism>
<proteinExistence type="inferred from homology"/>
<keyword id="KW-0067">ATP-binding</keyword>
<keyword id="KW-0963">Cytoplasm</keyword>
<keyword id="KW-0227">DNA damage</keyword>
<keyword id="KW-0228">DNA excision</keyword>
<keyword id="KW-0234">DNA repair</keyword>
<keyword id="KW-0267">Excision nuclease</keyword>
<keyword id="KW-0547">Nucleotide-binding</keyword>
<keyword id="KW-1185">Reference proteome</keyword>
<keyword id="KW-0742">SOS response</keyword>
<protein>
    <recommendedName>
        <fullName evidence="1">UvrABC system protein B</fullName>
        <shortName evidence="1">Protein UvrB</shortName>
    </recommendedName>
    <alternativeName>
        <fullName evidence="1">Excinuclease ABC subunit B</fullName>
    </alternativeName>
</protein>
<evidence type="ECO:0000255" key="1">
    <source>
        <dbReference type="HAMAP-Rule" id="MF_00204"/>
    </source>
</evidence>
<dbReference type="EMBL" id="AE010299">
    <property type="protein sequence ID" value="AAM06692.1"/>
    <property type="molecule type" value="Genomic_DNA"/>
</dbReference>
<dbReference type="RefSeq" id="WP_011023255.1">
    <property type="nucleotide sequence ID" value="NC_003552.1"/>
</dbReference>
<dbReference type="SMR" id="Q8TKS3"/>
<dbReference type="STRING" id="188937.MA_3323"/>
<dbReference type="EnsemblBacteria" id="AAM06692">
    <property type="protein sequence ID" value="AAM06692"/>
    <property type="gene ID" value="MA_3323"/>
</dbReference>
<dbReference type="GeneID" id="1475216"/>
<dbReference type="KEGG" id="mac:MA_3323"/>
<dbReference type="HOGENOM" id="CLU_009621_2_1_2"/>
<dbReference type="InParanoid" id="Q8TKS3"/>
<dbReference type="OrthoDB" id="8371at2157"/>
<dbReference type="PhylomeDB" id="Q8TKS3"/>
<dbReference type="Proteomes" id="UP000002487">
    <property type="component" value="Chromosome"/>
</dbReference>
<dbReference type="GO" id="GO:0005737">
    <property type="term" value="C:cytoplasm"/>
    <property type="evidence" value="ECO:0007669"/>
    <property type="project" value="UniProtKB-SubCell"/>
</dbReference>
<dbReference type="GO" id="GO:0009380">
    <property type="term" value="C:excinuclease repair complex"/>
    <property type="evidence" value="ECO:0000318"/>
    <property type="project" value="GO_Central"/>
</dbReference>
<dbReference type="GO" id="GO:0005524">
    <property type="term" value="F:ATP binding"/>
    <property type="evidence" value="ECO:0007669"/>
    <property type="project" value="UniProtKB-UniRule"/>
</dbReference>
<dbReference type="GO" id="GO:0016887">
    <property type="term" value="F:ATP hydrolysis activity"/>
    <property type="evidence" value="ECO:0007669"/>
    <property type="project" value="InterPro"/>
</dbReference>
<dbReference type="GO" id="GO:0003677">
    <property type="term" value="F:DNA binding"/>
    <property type="evidence" value="ECO:0007669"/>
    <property type="project" value="UniProtKB-UniRule"/>
</dbReference>
<dbReference type="GO" id="GO:0009381">
    <property type="term" value="F:excinuclease ABC activity"/>
    <property type="evidence" value="ECO:0007669"/>
    <property type="project" value="UniProtKB-UniRule"/>
</dbReference>
<dbReference type="GO" id="GO:0000715">
    <property type="term" value="P:nucleotide-excision repair, DNA damage recognition"/>
    <property type="evidence" value="ECO:0000318"/>
    <property type="project" value="GO_Central"/>
</dbReference>
<dbReference type="GO" id="GO:0009432">
    <property type="term" value="P:SOS response"/>
    <property type="evidence" value="ECO:0007669"/>
    <property type="project" value="UniProtKB-UniRule"/>
</dbReference>
<dbReference type="CDD" id="cd17916">
    <property type="entry name" value="DEXHc_UvrB"/>
    <property type="match status" value="1"/>
</dbReference>
<dbReference type="CDD" id="cd18790">
    <property type="entry name" value="SF2_C_UvrB"/>
    <property type="match status" value="1"/>
</dbReference>
<dbReference type="Gene3D" id="3.40.50.300">
    <property type="entry name" value="P-loop containing nucleotide triphosphate hydrolases"/>
    <property type="match status" value="3"/>
</dbReference>
<dbReference type="Gene3D" id="4.10.860.10">
    <property type="entry name" value="UVR domain"/>
    <property type="match status" value="1"/>
</dbReference>
<dbReference type="HAMAP" id="MF_00204">
    <property type="entry name" value="UvrB"/>
    <property type="match status" value="1"/>
</dbReference>
<dbReference type="InterPro" id="IPR006935">
    <property type="entry name" value="Helicase/UvrB_N"/>
</dbReference>
<dbReference type="InterPro" id="IPR014001">
    <property type="entry name" value="Helicase_ATP-bd"/>
</dbReference>
<dbReference type="InterPro" id="IPR001650">
    <property type="entry name" value="Helicase_C-like"/>
</dbReference>
<dbReference type="InterPro" id="IPR027417">
    <property type="entry name" value="P-loop_NTPase"/>
</dbReference>
<dbReference type="InterPro" id="IPR001943">
    <property type="entry name" value="UVR_dom"/>
</dbReference>
<dbReference type="InterPro" id="IPR036876">
    <property type="entry name" value="UVR_dom_sf"/>
</dbReference>
<dbReference type="InterPro" id="IPR004807">
    <property type="entry name" value="UvrB"/>
</dbReference>
<dbReference type="InterPro" id="IPR041471">
    <property type="entry name" value="UvrB_inter"/>
</dbReference>
<dbReference type="InterPro" id="IPR024759">
    <property type="entry name" value="UvrB_YAD/RRR_dom"/>
</dbReference>
<dbReference type="NCBIfam" id="NF003673">
    <property type="entry name" value="PRK05298.1"/>
    <property type="match status" value="1"/>
</dbReference>
<dbReference type="NCBIfam" id="TIGR00631">
    <property type="entry name" value="uvrb"/>
    <property type="match status" value="1"/>
</dbReference>
<dbReference type="PANTHER" id="PTHR24029">
    <property type="entry name" value="UVRABC SYSTEM PROTEIN B"/>
    <property type="match status" value="1"/>
</dbReference>
<dbReference type="PANTHER" id="PTHR24029:SF0">
    <property type="entry name" value="UVRABC SYSTEM PROTEIN B"/>
    <property type="match status" value="1"/>
</dbReference>
<dbReference type="Pfam" id="PF00271">
    <property type="entry name" value="Helicase_C"/>
    <property type="match status" value="1"/>
</dbReference>
<dbReference type="Pfam" id="PF04851">
    <property type="entry name" value="ResIII"/>
    <property type="match status" value="1"/>
</dbReference>
<dbReference type="Pfam" id="PF02151">
    <property type="entry name" value="UVR"/>
    <property type="match status" value="1"/>
</dbReference>
<dbReference type="Pfam" id="PF12344">
    <property type="entry name" value="UvrB"/>
    <property type="match status" value="1"/>
</dbReference>
<dbReference type="Pfam" id="PF17757">
    <property type="entry name" value="UvrB_inter"/>
    <property type="match status" value="1"/>
</dbReference>
<dbReference type="SMART" id="SM00487">
    <property type="entry name" value="DEXDc"/>
    <property type="match status" value="1"/>
</dbReference>
<dbReference type="SMART" id="SM00490">
    <property type="entry name" value="HELICc"/>
    <property type="match status" value="1"/>
</dbReference>
<dbReference type="SUPFAM" id="SSF46600">
    <property type="entry name" value="C-terminal UvrC-binding domain of UvrB"/>
    <property type="match status" value="1"/>
</dbReference>
<dbReference type="SUPFAM" id="SSF52540">
    <property type="entry name" value="P-loop containing nucleoside triphosphate hydrolases"/>
    <property type="match status" value="2"/>
</dbReference>
<dbReference type="PROSITE" id="PS51192">
    <property type="entry name" value="HELICASE_ATP_BIND_1"/>
    <property type="match status" value="1"/>
</dbReference>
<dbReference type="PROSITE" id="PS51194">
    <property type="entry name" value="HELICASE_CTER"/>
    <property type="match status" value="1"/>
</dbReference>
<dbReference type="PROSITE" id="PS50151">
    <property type="entry name" value="UVR"/>
    <property type="match status" value="1"/>
</dbReference>